<keyword id="KW-0414">Isoprene biosynthesis</keyword>
<keyword id="KW-0464">Manganese</keyword>
<keyword id="KW-0479">Metal-binding</keyword>
<keyword id="KW-0521">NADP</keyword>
<keyword id="KW-0560">Oxidoreductase</keyword>
<proteinExistence type="inferred from homology"/>
<feature type="chain" id="PRO_1000020237" description="1-deoxy-D-xylulose 5-phosphate reductoisomerase">
    <location>
        <begin position="1"/>
        <end position="360"/>
    </location>
</feature>
<feature type="binding site" evidence="1">
    <location>
        <position position="7"/>
    </location>
    <ligand>
        <name>NADPH</name>
        <dbReference type="ChEBI" id="CHEBI:57783"/>
    </ligand>
</feature>
<feature type="binding site" evidence="1">
    <location>
        <position position="8"/>
    </location>
    <ligand>
        <name>NADPH</name>
        <dbReference type="ChEBI" id="CHEBI:57783"/>
    </ligand>
</feature>
<feature type="binding site" evidence="1">
    <location>
        <position position="9"/>
    </location>
    <ligand>
        <name>NADPH</name>
        <dbReference type="ChEBI" id="CHEBI:57783"/>
    </ligand>
</feature>
<feature type="binding site" evidence="1">
    <location>
        <position position="10"/>
    </location>
    <ligand>
        <name>NADPH</name>
        <dbReference type="ChEBI" id="CHEBI:57783"/>
    </ligand>
</feature>
<feature type="binding site" evidence="1">
    <location>
        <position position="115"/>
    </location>
    <ligand>
        <name>NADPH</name>
        <dbReference type="ChEBI" id="CHEBI:57783"/>
    </ligand>
</feature>
<feature type="binding site" evidence="1">
    <location>
        <position position="116"/>
    </location>
    <ligand>
        <name>1-deoxy-D-xylulose 5-phosphate</name>
        <dbReference type="ChEBI" id="CHEBI:57792"/>
    </ligand>
</feature>
<feature type="binding site" evidence="1">
    <location>
        <position position="117"/>
    </location>
    <ligand>
        <name>NADPH</name>
        <dbReference type="ChEBI" id="CHEBI:57783"/>
    </ligand>
</feature>
<feature type="binding site" evidence="1">
    <location>
        <position position="135"/>
    </location>
    <ligand>
        <name>Mn(2+)</name>
        <dbReference type="ChEBI" id="CHEBI:29035"/>
    </ligand>
</feature>
<feature type="binding site" evidence="1">
    <location>
        <position position="136"/>
    </location>
    <ligand>
        <name>1-deoxy-D-xylulose 5-phosphate</name>
        <dbReference type="ChEBI" id="CHEBI:57792"/>
    </ligand>
</feature>
<feature type="binding site" evidence="1">
    <location>
        <position position="137"/>
    </location>
    <ligand>
        <name>1-deoxy-D-xylulose 5-phosphate</name>
        <dbReference type="ChEBI" id="CHEBI:57792"/>
    </ligand>
</feature>
<feature type="binding site" evidence="1">
    <location>
        <position position="137"/>
    </location>
    <ligand>
        <name>Mn(2+)</name>
        <dbReference type="ChEBI" id="CHEBI:29035"/>
    </ligand>
</feature>
<feature type="binding site" evidence="1">
    <location>
        <position position="159"/>
    </location>
    <ligand>
        <name>1-deoxy-D-xylulose 5-phosphate</name>
        <dbReference type="ChEBI" id="CHEBI:57792"/>
    </ligand>
</feature>
<feature type="binding site" evidence="1">
    <location>
        <position position="182"/>
    </location>
    <ligand>
        <name>1-deoxy-D-xylulose 5-phosphate</name>
        <dbReference type="ChEBI" id="CHEBI:57792"/>
    </ligand>
</feature>
<feature type="binding site" evidence="1">
    <location>
        <position position="188"/>
    </location>
    <ligand>
        <name>NADPH</name>
        <dbReference type="ChEBI" id="CHEBI:57783"/>
    </ligand>
</feature>
<feature type="binding site" evidence="1">
    <location>
        <position position="195"/>
    </location>
    <ligand>
        <name>1-deoxy-D-xylulose 5-phosphate</name>
        <dbReference type="ChEBI" id="CHEBI:57792"/>
    </ligand>
</feature>
<feature type="binding site" evidence="1">
    <location>
        <position position="200"/>
    </location>
    <ligand>
        <name>1-deoxy-D-xylulose 5-phosphate</name>
        <dbReference type="ChEBI" id="CHEBI:57792"/>
    </ligand>
</feature>
<feature type="binding site" evidence="1">
    <location>
        <position position="201"/>
    </location>
    <ligand>
        <name>1-deoxy-D-xylulose 5-phosphate</name>
        <dbReference type="ChEBI" id="CHEBI:57792"/>
    </ligand>
</feature>
<feature type="binding site" evidence="1">
    <location>
        <position position="204"/>
    </location>
    <ligand>
        <name>1-deoxy-D-xylulose 5-phosphate</name>
        <dbReference type="ChEBI" id="CHEBI:57792"/>
    </ligand>
</feature>
<feature type="binding site" evidence="1">
    <location>
        <position position="204"/>
    </location>
    <ligand>
        <name>Mn(2+)</name>
        <dbReference type="ChEBI" id="CHEBI:29035"/>
    </ligand>
</feature>
<evidence type="ECO:0000255" key="1">
    <source>
        <dbReference type="HAMAP-Rule" id="MF_00183"/>
    </source>
</evidence>
<organism>
    <name type="scientific">Campylobacter fetus subsp. fetus (strain 82-40)</name>
    <dbReference type="NCBI Taxonomy" id="360106"/>
    <lineage>
        <taxon>Bacteria</taxon>
        <taxon>Pseudomonadati</taxon>
        <taxon>Campylobacterota</taxon>
        <taxon>Epsilonproteobacteria</taxon>
        <taxon>Campylobacterales</taxon>
        <taxon>Campylobacteraceae</taxon>
        <taxon>Campylobacter</taxon>
    </lineage>
</organism>
<protein>
    <recommendedName>
        <fullName evidence="1">1-deoxy-D-xylulose 5-phosphate reductoisomerase</fullName>
        <shortName evidence="1">DXP reductoisomerase</shortName>
        <ecNumber evidence="1">1.1.1.267</ecNumber>
    </recommendedName>
    <alternativeName>
        <fullName evidence="1">1-deoxyxylulose-5-phosphate reductoisomerase</fullName>
    </alternativeName>
    <alternativeName>
        <fullName evidence="1">2-C-methyl-D-erythritol 4-phosphate synthase</fullName>
    </alternativeName>
</protein>
<accession>A0RMI1</accession>
<name>DXR_CAMFF</name>
<reference key="1">
    <citation type="submission" date="2006-11" db="EMBL/GenBank/DDBJ databases">
        <title>Sequence of Campylobacter fetus subsp. fetus 82-40.</title>
        <authorList>
            <person name="Fouts D.E."/>
            <person name="Nelson K.E."/>
        </authorList>
    </citation>
    <scope>NUCLEOTIDE SEQUENCE [LARGE SCALE GENOMIC DNA]</scope>
    <source>
        <strain>82-40</strain>
    </source>
</reference>
<sequence length="360" mass="40198">MILLGSSGSIGKNVAFLAMKYGIKLDALACKTDYKELNSQISKFNPKFVYIEDNKLKNLVEHSRVFTSKDGIDKFLEACYDEFGSTVVINSLVGFSGLRPSLVSQKLGFKLALANKESLVAGGKFLDTKSINPIDSEHFGLKFLLKNRPAVKKMIITASGGAFYDMHINELEFVTAKSALKHPNWSMGAKITIDSATMANKLFEVLEAYHLYGIKDIDAFIERTSCIHALISFMDGSTTAHISRTDMKLAIAHAIGLEEKEILEPIDILSLKNISFNTINLKKYPIFTLKKDVLNNPDLGVIINAANEEMVYKFLNNEISFLDINRAVFKSLDKFGSVKIDDEDTVFEIDKKVREFCKGF</sequence>
<comment type="function">
    <text evidence="1">Catalyzes the NADPH-dependent rearrangement and reduction of 1-deoxy-D-xylulose-5-phosphate (DXP) to 2-C-methyl-D-erythritol 4-phosphate (MEP).</text>
</comment>
<comment type="catalytic activity">
    <reaction evidence="1">
        <text>2-C-methyl-D-erythritol 4-phosphate + NADP(+) = 1-deoxy-D-xylulose 5-phosphate + NADPH + H(+)</text>
        <dbReference type="Rhea" id="RHEA:13717"/>
        <dbReference type="ChEBI" id="CHEBI:15378"/>
        <dbReference type="ChEBI" id="CHEBI:57783"/>
        <dbReference type="ChEBI" id="CHEBI:57792"/>
        <dbReference type="ChEBI" id="CHEBI:58262"/>
        <dbReference type="ChEBI" id="CHEBI:58349"/>
        <dbReference type="EC" id="1.1.1.267"/>
    </reaction>
    <physiologicalReaction direction="right-to-left" evidence="1">
        <dbReference type="Rhea" id="RHEA:13719"/>
    </physiologicalReaction>
</comment>
<comment type="cofactor">
    <cofactor evidence="1">
        <name>Mg(2+)</name>
        <dbReference type="ChEBI" id="CHEBI:18420"/>
    </cofactor>
    <cofactor evidence="1">
        <name>Mn(2+)</name>
        <dbReference type="ChEBI" id="CHEBI:29035"/>
    </cofactor>
</comment>
<comment type="pathway">
    <text evidence="1">Isoprenoid biosynthesis; isopentenyl diphosphate biosynthesis via DXP pathway; isopentenyl diphosphate from 1-deoxy-D-xylulose 5-phosphate: step 1/6.</text>
</comment>
<comment type="similarity">
    <text evidence="1">Belongs to the DXR family.</text>
</comment>
<gene>
    <name evidence="1" type="primary">dxr</name>
    <name type="ordered locus">CFF8240_0210</name>
</gene>
<dbReference type="EC" id="1.1.1.267" evidence="1"/>
<dbReference type="EMBL" id="CP000487">
    <property type="protein sequence ID" value="ABK82287.1"/>
    <property type="molecule type" value="Genomic_DNA"/>
</dbReference>
<dbReference type="RefSeq" id="WP_002848238.1">
    <property type="nucleotide sequence ID" value="NC_008599.1"/>
</dbReference>
<dbReference type="SMR" id="A0RMI1"/>
<dbReference type="KEGG" id="cff:CFF8240_0210"/>
<dbReference type="eggNOG" id="COG0743">
    <property type="taxonomic scope" value="Bacteria"/>
</dbReference>
<dbReference type="HOGENOM" id="CLU_035714_0_0_7"/>
<dbReference type="UniPathway" id="UPA00056">
    <property type="reaction ID" value="UER00092"/>
</dbReference>
<dbReference type="Proteomes" id="UP000000760">
    <property type="component" value="Chromosome"/>
</dbReference>
<dbReference type="GO" id="GO:0030604">
    <property type="term" value="F:1-deoxy-D-xylulose-5-phosphate reductoisomerase activity"/>
    <property type="evidence" value="ECO:0007669"/>
    <property type="project" value="UniProtKB-UniRule"/>
</dbReference>
<dbReference type="GO" id="GO:0030145">
    <property type="term" value="F:manganese ion binding"/>
    <property type="evidence" value="ECO:0007669"/>
    <property type="project" value="TreeGrafter"/>
</dbReference>
<dbReference type="GO" id="GO:0070402">
    <property type="term" value="F:NADPH binding"/>
    <property type="evidence" value="ECO:0007669"/>
    <property type="project" value="InterPro"/>
</dbReference>
<dbReference type="GO" id="GO:0051484">
    <property type="term" value="P:isopentenyl diphosphate biosynthetic process, methylerythritol 4-phosphate pathway involved in terpenoid biosynthetic process"/>
    <property type="evidence" value="ECO:0007669"/>
    <property type="project" value="TreeGrafter"/>
</dbReference>
<dbReference type="Gene3D" id="1.10.1740.10">
    <property type="match status" value="1"/>
</dbReference>
<dbReference type="Gene3D" id="3.40.50.720">
    <property type="entry name" value="NAD(P)-binding Rossmann-like Domain"/>
    <property type="match status" value="1"/>
</dbReference>
<dbReference type="HAMAP" id="MF_00183">
    <property type="entry name" value="DXP_reductoisom"/>
    <property type="match status" value="1"/>
</dbReference>
<dbReference type="InterPro" id="IPR003821">
    <property type="entry name" value="DXP_reductoisomerase"/>
</dbReference>
<dbReference type="InterPro" id="IPR013644">
    <property type="entry name" value="DXP_reductoisomerase_C"/>
</dbReference>
<dbReference type="InterPro" id="IPR013512">
    <property type="entry name" value="DXP_reductoisomerase_N"/>
</dbReference>
<dbReference type="InterPro" id="IPR026877">
    <property type="entry name" value="DXPR_C"/>
</dbReference>
<dbReference type="InterPro" id="IPR036169">
    <property type="entry name" value="DXPR_C_sf"/>
</dbReference>
<dbReference type="InterPro" id="IPR036291">
    <property type="entry name" value="NAD(P)-bd_dom_sf"/>
</dbReference>
<dbReference type="PANTHER" id="PTHR30525">
    <property type="entry name" value="1-DEOXY-D-XYLULOSE 5-PHOSPHATE REDUCTOISOMERASE"/>
    <property type="match status" value="1"/>
</dbReference>
<dbReference type="PANTHER" id="PTHR30525:SF0">
    <property type="entry name" value="1-DEOXY-D-XYLULOSE 5-PHOSPHATE REDUCTOISOMERASE, CHLOROPLASTIC"/>
    <property type="match status" value="1"/>
</dbReference>
<dbReference type="Pfam" id="PF08436">
    <property type="entry name" value="DXP_redisom_C"/>
    <property type="match status" value="1"/>
</dbReference>
<dbReference type="Pfam" id="PF02670">
    <property type="entry name" value="DXP_reductoisom"/>
    <property type="match status" value="1"/>
</dbReference>
<dbReference type="Pfam" id="PF13288">
    <property type="entry name" value="DXPR_C"/>
    <property type="match status" value="1"/>
</dbReference>
<dbReference type="PIRSF" id="PIRSF006205">
    <property type="entry name" value="Dxp_reductismrs"/>
    <property type="match status" value="1"/>
</dbReference>
<dbReference type="SUPFAM" id="SSF69055">
    <property type="entry name" value="1-deoxy-D-xylulose-5-phosphate reductoisomerase, C-terminal domain"/>
    <property type="match status" value="1"/>
</dbReference>
<dbReference type="SUPFAM" id="SSF55347">
    <property type="entry name" value="Glyceraldehyde-3-phosphate dehydrogenase-like, C-terminal domain"/>
    <property type="match status" value="1"/>
</dbReference>
<dbReference type="SUPFAM" id="SSF51735">
    <property type="entry name" value="NAD(P)-binding Rossmann-fold domains"/>
    <property type="match status" value="1"/>
</dbReference>